<protein>
    <recommendedName>
        <fullName>Alpha-zingiberene synthase</fullName>
        <ecNumber>4.2.3.65</ecNumber>
    </recommendedName>
</protein>
<accession>Q5SBP4</accession>
<reference key="1">
    <citation type="journal article" date="2004" name="Plant Physiol.">
        <title>The biochemical and molecular basis for the divergent patterns in the biosynthesis of terpenes and phenylpropenes in the peltate glands of three cultivars of basil.</title>
        <authorList>
            <person name="Iijima Y."/>
            <person name="Davidovich-Rikanati R."/>
            <person name="Fridman E."/>
            <person name="Gang D.R."/>
            <person name="Bar E."/>
            <person name="Lewinsohn E."/>
            <person name="Pichersky E."/>
        </authorList>
    </citation>
    <scope>NUCLEOTIDE SEQUENCE [MRNA]</scope>
    <scope>FUNCTION</scope>
    <scope>CATALYTIC ACTIVITY</scope>
</reference>
<reference key="2">
    <citation type="journal article" date="2008" name="Plant J.">
        <title>Overexpression of the lemon basil alpha-zingiberene synthase gene increases both mono- and sesquiterpene contents in tomato fruit.</title>
        <authorList>
            <person name="Davidovich-Rikanati R."/>
            <person name="Lewinsohn E."/>
            <person name="Bar E."/>
            <person name="Iijima Y."/>
            <person name="Pichersky E."/>
            <person name="Sitrit Y."/>
        </authorList>
    </citation>
    <scope>FUNCTION</scope>
</reference>
<organism>
    <name type="scientific">Ocimum basilicum</name>
    <name type="common">Sweet basil</name>
    <dbReference type="NCBI Taxonomy" id="39350"/>
    <lineage>
        <taxon>Eukaryota</taxon>
        <taxon>Viridiplantae</taxon>
        <taxon>Streptophyta</taxon>
        <taxon>Embryophyta</taxon>
        <taxon>Tracheophyta</taxon>
        <taxon>Spermatophyta</taxon>
        <taxon>Magnoliopsida</taxon>
        <taxon>eudicotyledons</taxon>
        <taxon>Gunneridae</taxon>
        <taxon>Pentapetalae</taxon>
        <taxon>asterids</taxon>
        <taxon>lamiids</taxon>
        <taxon>Lamiales</taxon>
        <taxon>Lamiaceae</taxon>
        <taxon>Nepetoideae</taxon>
        <taxon>Ocimeae</taxon>
        <taxon>Ociminae</taxon>
        <taxon>Ocimum</taxon>
    </lineage>
</organism>
<keyword id="KW-0456">Lyase</keyword>
<keyword id="KW-0460">Magnesium</keyword>
<keyword id="KW-0479">Metal-binding</keyword>
<sequence>MESRRSANYQASIWDDNFIQSLASPYAGEKYAEKAEKLKTEVKTMIDQTRDELKQLELIDNLQRLGICHHFQDLTKKILQKIYGEERNGDHQHYKEKGLHFTALRFRILRQDGYHVPQDVFSSFMNKAGDFEESLSKDTKGLVSLYEASYLSMEGETILDMAKDFSSHHLHKMVEDATDKRVANQIIHSLEMPLHRRVQKLEAIWFIQFYECGSDANPTLVELAKLDFNMVQATYQEELKRLSRWYEETGLQEKLSFARHRLAEAFLWSMGIIPEGHFGYGRMHLMKIGAYITLLDDIYDVYGTLEELQVLTEIIERWDINLLDQLPEYMQIFFLYMFNSTNELAYEILRDQGINVISNLKGLWVELSQCYFKEATWFHNGYTPTTEEYLNVACISASGPVILFSGYFTTTNPINKHELQSLERHAHSLSMILRLADDLGTSSDEMKRGDVPKAIQCFMNDTGCCEEEARQHVKRLIDAEWKKMNKDILMEKPFKNFCPTAMNLGRISMSFYEHGDGYGGPHSDTKKKMVSLFVQPMNITI</sequence>
<feature type="chain" id="PRO_0000399252" description="Alpha-zingiberene synthase">
    <location>
        <begin position="1"/>
        <end position="541"/>
    </location>
</feature>
<feature type="short sequence motif" description="DDXXD motif">
    <location>
        <begin position="296"/>
        <end position="300"/>
    </location>
</feature>
<feature type="binding site" evidence="1">
    <location>
        <position position="296"/>
    </location>
    <ligand>
        <name>Mg(2+)</name>
        <dbReference type="ChEBI" id="CHEBI:18420"/>
        <label>1</label>
    </ligand>
</feature>
<feature type="binding site" evidence="1">
    <location>
        <position position="296"/>
    </location>
    <ligand>
        <name>Mg(2+)</name>
        <dbReference type="ChEBI" id="CHEBI:18420"/>
        <label>2</label>
    </ligand>
</feature>
<feature type="binding site" evidence="1">
    <location>
        <position position="300"/>
    </location>
    <ligand>
        <name>Mg(2+)</name>
        <dbReference type="ChEBI" id="CHEBI:18420"/>
        <label>1</label>
    </ligand>
</feature>
<feature type="binding site" evidence="1">
    <location>
        <position position="300"/>
    </location>
    <ligand>
        <name>Mg(2+)</name>
        <dbReference type="ChEBI" id="CHEBI:18420"/>
        <label>2</label>
    </ligand>
</feature>
<feature type="binding site" evidence="1">
    <location>
        <position position="437"/>
    </location>
    <ligand>
        <name>Mg(2+)</name>
        <dbReference type="ChEBI" id="CHEBI:18420"/>
        <label>3</label>
    </ligand>
</feature>
<feature type="binding site" evidence="1">
    <location>
        <position position="441"/>
    </location>
    <ligand>
        <name>Mg(2+)</name>
        <dbReference type="ChEBI" id="CHEBI:18420"/>
        <label>3</label>
    </ligand>
</feature>
<feature type="binding site" evidence="1">
    <location>
        <position position="445"/>
    </location>
    <ligand>
        <name>Mg(2+)</name>
        <dbReference type="ChEBI" id="CHEBI:18420"/>
        <label>3</label>
    </ligand>
</feature>
<gene>
    <name type="primary">ZIS</name>
</gene>
<comment type="function">
    <text evidence="2 3">Sesquiterpene synthase that catalyzes the formation of alpha-zingiberene and other sesquiterpenes from trans,trans-farnesyl diphosphate (FPP). May have an additional monoterpene synthase activity.</text>
</comment>
<comment type="catalytic activity">
    <reaction evidence="2">
        <text>(2E,6E)-farnesyl diphosphate = alpha-zingiberene + diphosphate</text>
        <dbReference type="Rhea" id="RHEA:28643"/>
        <dbReference type="ChEBI" id="CHEBI:10115"/>
        <dbReference type="ChEBI" id="CHEBI:33019"/>
        <dbReference type="ChEBI" id="CHEBI:175763"/>
        <dbReference type="EC" id="4.2.3.65"/>
    </reaction>
</comment>
<comment type="cofactor">
    <cofactor evidence="1">
        <name>Mg(2+)</name>
        <dbReference type="ChEBI" id="CHEBI:18420"/>
    </cofactor>
    <cofactor evidence="1">
        <name>Mn(2+)</name>
        <dbReference type="ChEBI" id="CHEBI:29035"/>
    </cofactor>
    <text evidence="1">Binds 3 Mg(2+) or Mn(2+) ions per subunit.</text>
</comment>
<comment type="pathway">
    <text>Secondary metabolite biosynthesis; terpenoid biosynthesis.</text>
</comment>
<comment type="domain">
    <text>The Asp-Asp-Xaa-Xaa-Asp/Glu (DDXXD/E) motif is important for the catalytic activity, presumably through binding to Mg(2+).</text>
</comment>
<comment type="similarity">
    <text evidence="4">Belongs to the terpene synthase family.</text>
</comment>
<dbReference type="EC" id="4.2.3.65"/>
<dbReference type="EMBL" id="AY693646">
    <property type="protein sequence ID" value="AAV63788.1"/>
    <property type="molecule type" value="mRNA"/>
</dbReference>
<dbReference type="SMR" id="Q5SBP4"/>
<dbReference type="KEGG" id="ag:AAV63788"/>
<dbReference type="BRENDA" id="4.2.3.65">
    <property type="organism ID" value="4385"/>
</dbReference>
<dbReference type="UniPathway" id="UPA00213"/>
<dbReference type="GO" id="GO:0102884">
    <property type="term" value="F:alpha-zingiberene synthase activity"/>
    <property type="evidence" value="ECO:0007669"/>
    <property type="project" value="UniProtKB-EC"/>
</dbReference>
<dbReference type="GO" id="GO:0000287">
    <property type="term" value="F:magnesium ion binding"/>
    <property type="evidence" value="ECO:0007669"/>
    <property type="project" value="InterPro"/>
</dbReference>
<dbReference type="GO" id="GO:0010333">
    <property type="term" value="F:terpene synthase activity"/>
    <property type="evidence" value="ECO:0007669"/>
    <property type="project" value="InterPro"/>
</dbReference>
<dbReference type="GO" id="GO:0016102">
    <property type="term" value="P:diterpenoid biosynthetic process"/>
    <property type="evidence" value="ECO:0007669"/>
    <property type="project" value="InterPro"/>
</dbReference>
<dbReference type="CDD" id="cd00684">
    <property type="entry name" value="Terpene_cyclase_plant_C1"/>
    <property type="match status" value="1"/>
</dbReference>
<dbReference type="FunFam" id="1.10.600.10:FF:000007">
    <property type="entry name" value="Isoprene synthase, chloroplastic"/>
    <property type="match status" value="1"/>
</dbReference>
<dbReference type="FunFam" id="1.50.10.130:FF:000001">
    <property type="entry name" value="Isoprene synthase, chloroplastic"/>
    <property type="match status" value="1"/>
</dbReference>
<dbReference type="Gene3D" id="1.10.600.10">
    <property type="entry name" value="Farnesyl Diphosphate Synthase"/>
    <property type="match status" value="1"/>
</dbReference>
<dbReference type="Gene3D" id="1.50.10.130">
    <property type="entry name" value="Terpene synthase, N-terminal domain"/>
    <property type="match status" value="1"/>
</dbReference>
<dbReference type="InterPro" id="IPR008949">
    <property type="entry name" value="Isoprenoid_synthase_dom_sf"/>
</dbReference>
<dbReference type="InterPro" id="IPR034741">
    <property type="entry name" value="Terpene_cyclase-like_1_C"/>
</dbReference>
<dbReference type="InterPro" id="IPR044814">
    <property type="entry name" value="Terpene_cyclase_plant_C1"/>
</dbReference>
<dbReference type="InterPro" id="IPR001906">
    <property type="entry name" value="Terpene_synth_N"/>
</dbReference>
<dbReference type="InterPro" id="IPR036965">
    <property type="entry name" value="Terpene_synth_N_sf"/>
</dbReference>
<dbReference type="InterPro" id="IPR050148">
    <property type="entry name" value="Terpene_synthase-like"/>
</dbReference>
<dbReference type="InterPro" id="IPR005630">
    <property type="entry name" value="Terpene_synthase_metal-bd"/>
</dbReference>
<dbReference type="InterPro" id="IPR008930">
    <property type="entry name" value="Terpenoid_cyclase/PrenylTrfase"/>
</dbReference>
<dbReference type="PANTHER" id="PTHR31225:SF256">
    <property type="entry name" value="(-)-ALPHA-TERPINEOL SYNTHASE-LIKE"/>
    <property type="match status" value="1"/>
</dbReference>
<dbReference type="PANTHER" id="PTHR31225">
    <property type="entry name" value="OS04G0344100 PROTEIN-RELATED"/>
    <property type="match status" value="1"/>
</dbReference>
<dbReference type="Pfam" id="PF01397">
    <property type="entry name" value="Terpene_synth"/>
    <property type="match status" value="1"/>
</dbReference>
<dbReference type="Pfam" id="PF03936">
    <property type="entry name" value="Terpene_synth_C"/>
    <property type="match status" value="1"/>
</dbReference>
<dbReference type="SFLD" id="SFLDS00005">
    <property type="entry name" value="Isoprenoid_Synthase_Type_I"/>
    <property type="match status" value="1"/>
</dbReference>
<dbReference type="SFLD" id="SFLDG01019">
    <property type="entry name" value="Terpene_Cyclase_Like_1_C_Termi"/>
    <property type="match status" value="1"/>
</dbReference>
<dbReference type="SUPFAM" id="SSF48239">
    <property type="entry name" value="Terpenoid cyclases/Protein prenyltransferases"/>
    <property type="match status" value="1"/>
</dbReference>
<dbReference type="SUPFAM" id="SSF48576">
    <property type="entry name" value="Terpenoid synthases"/>
    <property type="match status" value="1"/>
</dbReference>
<evidence type="ECO:0000250" key="1"/>
<evidence type="ECO:0000269" key="2">
    <source>
    </source>
</evidence>
<evidence type="ECO:0000269" key="3">
    <source>
    </source>
</evidence>
<evidence type="ECO:0000305" key="4"/>
<proteinExistence type="evidence at protein level"/>
<name>AZIS_OCIBA</name>